<keyword id="KW-0067">ATP-binding</keyword>
<keyword id="KW-0997">Cell inner membrane</keyword>
<keyword id="KW-1003">Cell membrane</keyword>
<keyword id="KW-0418">Kinase</keyword>
<keyword id="KW-0472">Membrane</keyword>
<keyword id="KW-0547">Nucleotide-binding</keyword>
<keyword id="KW-1185">Reference proteome</keyword>
<keyword id="KW-0808">Transferase</keyword>
<keyword id="KW-0812">Transmembrane</keyword>
<keyword id="KW-1133">Transmembrane helix</keyword>
<keyword id="KW-0831">Ubiquinone biosynthesis</keyword>
<proteinExistence type="inferred from homology"/>
<reference key="1">
    <citation type="journal article" date="2008" name="Environ. Microbiol.">
        <title>The genome of Erwinia tasmaniensis strain Et1/99, a non-pathogenic bacterium in the genus Erwinia.</title>
        <authorList>
            <person name="Kube M."/>
            <person name="Migdoll A.M."/>
            <person name="Mueller I."/>
            <person name="Kuhl H."/>
            <person name="Beck A."/>
            <person name="Reinhardt R."/>
            <person name="Geider K."/>
        </authorList>
    </citation>
    <scope>NUCLEOTIDE SEQUENCE [LARGE SCALE GENOMIC DNA]</scope>
    <source>
        <strain>DSM 17950 / CFBP 7177 / CIP 109463 / NCPPB 4357 / Et1/99</strain>
    </source>
</reference>
<comment type="function">
    <text evidence="1">Is probably a protein kinase regulator of UbiI activity which is involved in aerobic coenzyme Q (ubiquinone) biosynthesis.</text>
</comment>
<comment type="pathway">
    <text>Cofactor biosynthesis; ubiquinone biosynthesis [regulation].</text>
</comment>
<comment type="subcellular location">
    <subcellularLocation>
        <location evidence="1">Cell inner membrane</location>
        <topology evidence="1">Multi-pass membrane protein</topology>
    </subcellularLocation>
</comment>
<comment type="similarity">
    <text evidence="1">Belongs to the ABC1 family. UbiB subfamily.</text>
</comment>
<name>UBIB_ERWT9</name>
<organism>
    <name type="scientific">Erwinia tasmaniensis (strain DSM 17950 / CFBP 7177 / CIP 109463 / NCPPB 4357 / Et1/99)</name>
    <dbReference type="NCBI Taxonomy" id="465817"/>
    <lineage>
        <taxon>Bacteria</taxon>
        <taxon>Pseudomonadati</taxon>
        <taxon>Pseudomonadota</taxon>
        <taxon>Gammaproteobacteria</taxon>
        <taxon>Enterobacterales</taxon>
        <taxon>Erwiniaceae</taxon>
        <taxon>Erwinia</taxon>
    </lineage>
</organism>
<accession>B2VG47</accession>
<feature type="chain" id="PRO_1000123910" description="Probable protein kinase UbiB">
    <location>
        <begin position="1"/>
        <end position="545"/>
    </location>
</feature>
<feature type="transmembrane region" description="Helical" evidence="1">
    <location>
        <begin position="498"/>
        <end position="518"/>
    </location>
</feature>
<feature type="transmembrane region" description="Helical" evidence="1">
    <location>
        <begin position="521"/>
        <end position="541"/>
    </location>
</feature>
<feature type="domain" description="Protein kinase" evidence="1">
    <location>
        <begin position="123"/>
        <end position="501"/>
    </location>
</feature>
<feature type="active site" description="Proton acceptor" evidence="1">
    <location>
        <position position="287"/>
    </location>
</feature>
<feature type="binding site" evidence="1">
    <location>
        <begin position="129"/>
        <end position="137"/>
    </location>
    <ligand>
        <name>ATP</name>
        <dbReference type="ChEBI" id="CHEBI:30616"/>
    </ligand>
</feature>
<feature type="binding site" evidence="1">
    <location>
        <position position="152"/>
    </location>
    <ligand>
        <name>ATP</name>
        <dbReference type="ChEBI" id="CHEBI:30616"/>
    </ligand>
</feature>
<gene>
    <name evidence="1" type="primary">ubiB</name>
    <name type="ordered locus">ETA_02370</name>
</gene>
<dbReference type="EC" id="2.7.-.-" evidence="1"/>
<dbReference type="EMBL" id="CU468135">
    <property type="protein sequence ID" value="CAO95283.1"/>
    <property type="molecule type" value="Genomic_DNA"/>
</dbReference>
<dbReference type="RefSeq" id="WP_012440003.1">
    <property type="nucleotide sequence ID" value="NC_010694.1"/>
</dbReference>
<dbReference type="SMR" id="B2VG47"/>
<dbReference type="STRING" id="465817.ETA_02370"/>
<dbReference type="KEGG" id="eta:ETA_02370"/>
<dbReference type="eggNOG" id="COG0661">
    <property type="taxonomic scope" value="Bacteria"/>
</dbReference>
<dbReference type="HOGENOM" id="CLU_006533_0_0_6"/>
<dbReference type="OrthoDB" id="9795390at2"/>
<dbReference type="UniPathway" id="UPA00232"/>
<dbReference type="Proteomes" id="UP000001726">
    <property type="component" value="Chromosome"/>
</dbReference>
<dbReference type="GO" id="GO:0005886">
    <property type="term" value="C:plasma membrane"/>
    <property type="evidence" value="ECO:0007669"/>
    <property type="project" value="UniProtKB-SubCell"/>
</dbReference>
<dbReference type="GO" id="GO:0005524">
    <property type="term" value="F:ATP binding"/>
    <property type="evidence" value="ECO:0007669"/>
    <property type="project" value="UniProtKB-KW"/>
</dbReference>
<dbReference type="GO" id="GO:0004672">
    <property type="term" value="F:protein kinase activity"/>
    <property type="evidence" value="ECO:0007669"/>
    <property type="project" value="UniProtKB-UniRule"/>
</dbReference>
<dbReference type="GO" id="GO:0010795">
    <property type="term" value="P:regulation of ubiquinone biosynthetic process"/>
    <property type="evidence" value="ECO:0007669"/>
    <property type="project" value="UniProtKB-UniRule"/>
</dbReference>
<dbReference type="GO" id="GO:0006744">
    <property type="term" value="P:ubiquinone biosynthetic process"/>
    <property type="evidence" value="ECO:0007669"/>
    <property type="project" value="UniProtKB-UniPathway"/>
</dbReference>
<dbReference type="CDD" id="cd13972">
    <property type="entry name" value="UbiB"/>
    <property type="match status" value="1"/>
</dbReference>
<dbReference type="HAMAP" id="MF_00414">
    <property type="entry name" value="UbiB"/>
    <property type="match status" value="1"/>
</dbReference>
<dbReference type="InterPro" id="IPR004147">
    <property type="entry name" value="ABC1_dom"/>
</dbReference>
<dbReference type="InterPro" id="IPR011009">
    <property type="entry name" value="Kinase-like_dom_sf"/>
</dbReference>
<dbReference type="InterPro" id="IPR010232">
    <property type="entry name" value="UbiB"/>
</dbReference>
<dbReference type="InterPro" id="IPR045308">
    <property type="entry name" value="UbiB_bact"/>
</dbReference>
<dbReference type="InterPro" id="IPR050154">
    <property type="entry name" value="UbiB_kinase"/>
</dbReference>
<dbReference type="NCBIfam" id="NF003404">
    <property type="entry name" value="PRK04750.1"/>
    <property type="match status" value="1"/>
</dbReference>
<dbReference type="NCBIfam" id="TIGR01982">
    <property type="entry name" value="UbiB"/>
    <property type="match status" value="1"/>
</dbReference>
<dbReference type="PANTHER" id="PTHR10566">
    <property type="entry name" value="CHAPERONE-ACTIVITY OF BC1 COMPLEX CABC1 -RELATED"/>
    <property type="match status" value="1"/>
</dbReference>
<dbReference type="PANTHER" id="PTHR10566:SF113">
    <property type="entry name" value="PROTEIN ACTIVITY OF BC1 COMPLEX KINASE 7, CHLOROPLASTIC"/>
    <property type="match status" value="1"/>
</dbReference>
<dbReference type="Pfam" id="PF03109">
    <property type="entry name" value="ABC1"/>
    <property type="match status" value="1"/>
</dbReference>
<dbReference type="SUPFAM" id="SSF56112">
    <property type="entry name" value="Protein kinase-like (PK-like)"/>
    <property type="match status" value="1"/>
</dbReference>
<evidence type="ECO:0000255" key="1">
    <source>
        <dbReference type="HAMAP-Rule" id="MF_00414"/>
    </source>
</evidence>
<protein>
    <recommendedName>
        <fullName evidence="1">Probable protein kinase UbiB</fullName>
        <ecNumber evidence="1">2.7.-.-</ecNumber>
    </recommendedName>
    <alternativeName>
        <fullName evidence="1">Ubiquinone biosynthesis protein UbiB</fullName>
    </alternativeName>
</protein>
<sequence>MIFGELRRLYLIIRVFLSYGLDELIPKTRLALPLRLWRKCLFWMPNCHKDEPLGARLRLALEQLGPVWIKFGQMMSTRRDLFPPHIADQLAMLQDKVAPFDGAQAKKLIEHSLGAPVESQFDDFDIVPLASASIAQVHTATLKENGREVVIKVIRPDILPVIKADMKLIYRLARWVPRLLPDGRRLRPQEVVADYEKTLLDELNLLREAANAIQLRRNFADGQMLYVPEIYSDYCSENMLVMERIYGIPISDVATLEQHGVNMKLLAERGVQVFFTQVFRDSFFHADMHPGNIFVSYEHPEDPQYIGIDCGIVGSLNKEDKRYLAENFIAFFNRDYRKVAELHVDSGWVPADTNVEDFEFAIRTVCEPIFEKPLAEISFGHVLLNLFNTARRFNMEVQPQLVLLQKTLLYVEGVGRQLYPQLDLWKTAKPFLENWIKDQIGIPAIVRALKEKAPYWAEKLPELPELFYDSLRQHKHLQHSVDRLTTDLRGERVRQHQSHYLFGVGATLLLSGTAVVLSRPEWDGLAAGLIAAGVVAWLVGWRKTS</sequence>